<keyword id="KW-0150">Chloroplast</keyword>
<keyword id="KW-0934">Plastid</keyword>
<keyword id="KW-0687">Ribonucleoprotein</keyword>
<keyword id="KW-0689">Ribosomal protein</keyword>
<keyword id="KW-0694">RNA-binding</keyword>
<keyword id="KW-0699">rRNA-binding</keyword>
<name>RR7_LEPVR</name>
<evidence type="ECO:0000250" key="1"/>
<evidence type="ECO:0000255" key="2">
    <source>
        <dbReference type="HAMAP-Rule" id="MF_00480"/>
    </source>
</evidence>
<evidence type="ECO:0000305" key="3"/>
<dbReference type="EMBL" id="AP009374">
    <property type="protein sequence ID" value="BAF50507.1"/>
    <property type="molecule type" value="Genomic_DNA"/>
</dbReference>
<dbReference type="EMBL" id="AP009374">
    <property type="protein sequence ID" value="BAF50524.1"/>
    <property type="molecule type" value="Genomic_DNA"/>
</dbReference>
<dbReference type="SMR" id="A4QLF2"/>
<dbReference type="GO" id="GO:0009507">
    <property type="term" value="C:chloroplast"/>
    <property type="evidence" value="ECO:0007669"/>
    <property type="project" value="UniProtKB-SubCell"/>
</dbReference>
<dbReference type="GO" id="GO:0015935">
    <property type="term" value="C:small ribosomal subunit"/>
    <property type="evidence" value="ECO:0007669"/>
    <property type="project" value="InterPro"/>
</dbReference>
<dbReference type="GO" id="GO:0019843">
    <property type="term" value="F:rRNA binding"/>
    <property type="evidence" value="ECO:0007669"/>
    <property type="project" value="UniProtKB-UniRule"/>
</dbReference>
<dbReference type="GO" id="GO:0003735">
    <property type="term" value="F:structural constituent of ribosome"/>
    <property type="evidence" value="ECO:0007669"/>
    <property type="project" value="InterPro"/>
</dbReference>
<dbReference type="GO" id="GO:0006412">
    <property type="term" value="P:translation"/>
    <property type="evidence" value="ECO:0007669"/>
    <property type="project" value="UniProtKB-UniRule"/>
</dbReference>
<dbReference type="CDD" id="cd14871">
    <property type="entry name" value="uS7_Chloroplast"/>
    <property type="match status" value="1"/>
</dbReference>
<dbReference type="FunFam" id="1.10.455.10:FF:000001">
    <property type="entry name" value="30S ribosomal protein S7"/>
    <property type="match status" value="1"/>
</dbReference>
<dbReference type="Gene3D" id="1.10.455.10">
    <property type="entry name" value="Ribosomal protein S7 domain"/>
    <property type="match status" value="1"/>
</dbReference>
<dbReference type="HAMAP" id="MF_00480_B">
    <property type="entry name" value="Ribosomal_uS7_B"/>
    <property type="match status" value="1"/>
</dbReference>
<dbReference type="InterPro" id="IPR000235">
    <property type="entry name" value="Ribosomal_uS7"/>
</dbReference>
<dbReference type="InterPro" id="IPR005717">
    <property type="entry name" value="Ribosomal_uS7_bac/org-type"/>
</dbReference>
<dbReference type="InterPro" id="IPR020606">
    <property type="entry name" value="Ribosomal_uS7_CS"/>
</dbReference>
<dbReference type="InterPro" id="IPR023798">
    <property type="entry name" value="Ribosomal_uS7_dom"/>
</dbReference>
<dbReference type="InterPro" id="IPR036823">
    <property type="entry name" value="Ribosomal_uS7_dom_sf"/>
</dbReference>
<dbReference type="NCBIfam" id="TIGR01029">
    <property type="entry name" value="rpsG_bact"/>
    <property type="match status" value="1"/>
</dbReference>
<dbReference type="PANTHER" id="PTHR11205">
    <property type="entry name" value="RIBOSOMAL PROTEIN S7"/>
    <property type="match status" value="1"/>
</dbReference>
<dbReference type="Pfam" id="PF00177">
    <property type="entry name" value="Ribosomal_S7"/>
    <property type="match status" value="1"/>
</dbReference>
<dbReference type="PIRSF" id="PIRSF002122">
    <property type="entry name" value="RPS7p_RPS7a_RPS5e_RPS7o"/>
    <property type="match status" value="1"/>
</dbReference>
<dbReference type="SUPFAM" id="SSF47973">
    <property type="entry name" value="Ribosomal protein S7"/>
    <property type="match status" value="1"/>
</dbReference>
<dbReference type="PROSITE" id="PS00052">
    <property type="entry name" value="RIBOSOMAL_S7"/>
    <property type="match status" value="1"/>
</dbReference>
<reference key="1">
    <citation type="submission" date="2007-03" db="EMBL/GenBank/DDBJ databases">
        <title>Sequencing analysis of Lepidium virginicum JO26 chloroplast DNA.</title>
        <authorList>
            <person name="Hosouchi T."/>
            <person name="Tsuruoka H."/>
            <person name="Kotani H."/>
        </authorList>
    </citation>
    <scope>NUCLEOTIDE SEQUENCE [LARGE SCALE GENOMIC DNA]</scope>
</reference>
<gene>
    <name type="primary">rps7-A</name>
</gene>
<gene>
    <name type="primary">rps7-B</name>
</gene>
<proteinExistence type="inferred from homology"/>
<accession>A4QLF2</accession>
<sequence length="155" mass="17357">MSRRGTAEEKTAKSDPIYRNRLVNMLVNRILKHGKKSLAYQIIYRALKKIQQKTETNPLSVLRQAIRGVTPDIAVKARRVGGSTHQVPIEIGSTQGKALAIRWLLGASRKRPGRNMAFKLSSELVDAAKGSGDAIRKKEETHRMAEANRAFAHFR</sequence>
<organism>
    <name type="scientific">Lepidium virginicum</name>
    <name type="common">Virginia pepperweed</name>
    <dbReference type="NCBI Taxonomy" id="59292"/>
    <lineage>
        <taxon>Eukaryota</taxon>
        <taxon>Viridiplantae</taxon>
        <taxon>Streptophyta</taxon>
        <taxon>Embryophyta</taxon>
        <taxon>Tracheophyta</taxon>
        <taxon>Spermatophyta</taxon>
        <taxon>Magnoliopsida</taxon>
        <taxon>eudicotyledons</taxon>
        <taxon>Gunneridae</taxon>
        <taxon>Pentapetalae</taxon>
        <taxon>rosids</taxon>
        <taxon>malvids</taxon>
        <taxon>Brassicales</taxon>
        <taxon>Brassicaceae</taxon>
        <taxon>Lepidieae</taxon>
        <taxon>Lepidium</taxon>
    </lineage>
</organism>
<feature type="chain" id="PRO_0000344345" description="Small ribosomal subunit protein uS7cz/uS7cy">
    <location>
        <begin position="1"/>
        <end position="155"/>
    </location>
</feature>
<geneLocation type="chloroplast"/>
<comment type="function">
    <text evidence="1">One of the primary rRNA binding proteins, it binds directly to 16S rRNA where it nucleates assembly of the head domain of the 30S subunit.</text>
</comment>
<comment type="subunit">
    <text evidence="1">Part of the 30S ribosomal subunit.</text>
</comment>
<comment type="subcellular location">
    <subcellularLocation>
        <location>Plastid</location>
        <location>Chloroplast</location>
    </subcellularLocation>
</comment>
<comment type="similarity">
    <text evidence="3">Belongs to the universal ribosomal protein uS7 family.</text>
</comment>
<protein>
    <recommendedName>
        <fullName evidence="2">Small ribosomal subunit protein uS7cz/uS7cy</fullName>
    </recommendedName>
    <alternativeName>
        <fullName>30S ribosomal protein S7, chloroplastic</fullName>
    </alternativeName>
</protein>